<comment type="function">
    <text evidence="3">Putative antitoxin component of a type II toxin-antitoxin (TA) system. Its cognate toxin would be HigB3.</text>
</comment>
<evidence type="ECO:0000255" key="1">
    <source>
        <dbReference type="PROSITE-ProRule" id="PRU00257"/>
    </source>
</evidence>
<evidence type="ECO:0000303" key="2">
    <source>
    </source>
</evidence>
<evidence type="ECO:0000305" key="3">
    <source>
    </source>
</evidence>
<evidence type="ECO:0007829" key="4">
    <source>
        <dbReference type="PDB" id="6LTY"/>
    </source>
</evidence>
<evidence type="ECO:0007829" key="5">
    <source>
        <dbReference type="PDB" id="6LTZ"/>
    </source>
</evidence>
<organism>
    <name type="scientific">Mycobacterium tuberculosis (strain ATCC 25618 / H37Rv)</name>
    <dbReference type="NCBI Taxonomy" id="83332"/>
    <lineage>
        <taxon>Bacteria</taxon>
        <taxon>Bacillati</taxon>
        <taxon>Actinomycetota</taxon>
        <taxon>Actinomycetes</taxon>
        <taxon>Mycobacteriales</taxon>
        <taxon>Mycobacteriaceae</taxon>
        <taxon>Mycobacterium</taxon>
        <taxon>Mycobacterium tuberculosis complex</taxon>
    </lineage>
</organism>
<dbReference type="EMBL" id="AL123456">
    <property type="protein sequence ID" value="CCP45994.1"/>
    <property type="molecule type" value="Genomic_DNA"/>
</dbReference>
<dbReference type="EMBL" id="CP003248">
    <property type="protein sequence ID" value="AFN51176.1"/>
    <property type="molecule type" value="Genomic_DNA"/>
</dbReference>
<dbReference type="EMBL" id="JLDD01000038">
    <property type="protein sequence ID" value="KBJ29229.1"/>
    <property type="molecule type" value="Genomic_DNA"/>
</dbReference>
<dbReference type="RefSeq" id="NP_217699.1">
    <property type="nucleotide sequence ID" value="NC_000962.3"/>
</dbReference>
<dbReference type="RefSeq" id="WP_003899955.1">
    <property type="nucleotide sequence ID" value="NZ_NVQJ01000019.1"/>
</dbReference>
<dbReference type="PDB" id="6LTY">
    <property type="method" value="X-ray"/>
    <property type="resolution" value="3.28 A"/>
    <property type="chains" value="A/B=1-109"/>
</dbReference>
<dbReference type="PDB" id="6LTZ">
    <property type="method" value="X-ray"/>
    <property type="resolution" value="1.97 A"/>
    <property type="chains" value="A/B=1-109"/>
</dbReference>
<dbReference type="PDBsum" id="6LTY"/>
<dbReference type="PDBsum" id="6LTZ"/>
<dbReference type="SMR" id="O53333"/>
<dbReference type="STRING" id="83332.Rv3183"/>
<dbReference type="PaxDb" id="83332-Rv3183"/>
<dbReference type="DNASU" id="888059"/>
<dbReference type="GeneID" id="888059"/>
<dbReference type="KEGG" id="mtu:Rv3183"/>
<dbReference type="KEGG" id="mtv:RVBD_3183"/>
<dbReference type="PATRIC" id="fig|83332.111.peg.3546"/>
<dbReference type="TubercuList" id="Rv3183"/>
<dbReference type="eggNOG" id="COG1396">
    <property type="taxonomic scope" value="Bacteria"/>
</dbReference>
<dbReference type="HOGENOM" id="CLU_066192_13_0_11"/>
<dbReference type="InParanoid" id="O53333"/>
<dbReference type="OrthoDB" id="5738376at2"/>
<dbReference type="PhylomeDB" id="O53333"/>
<dbReference type="Proteomes" id="UP000001584">
    <property type="component" value="Chromosome"/>
</dbReference>
<dbReference type="GO" id="GO:0003677">
    <property type="term" value="F:DNA binding"/>
    <property type="evidence" value="ECO:0007669"/>
    <property type="project" value="UniProtKB-KW"/>
</dbReference>
<dbReference type="CDD" id="cd00093">
    <property type="entry name" value="HTH_XRE"/>
    <property type="match status" value="1"/>
</dbReference>
<dbReference type="Gene3D" id="1.10.260.40">
    <property type="entry name" value="lambda repressor-like DNA-binding domains"/>
    <property type="match status" value="1"/>
</dbReference>
<dbReference type="InterPro" id="IPR001387">
    <property type="entry name" value="Cro/C1-type_HTH"/>
</dbReference>
<dbReference type="InterPro" id="IPR010982">
    <property type="entry name" value="Lambda_DNA-bd_dom_sf"/>
</dbReference>
<dbReference type="Pfam" id="PF01381">
    <property type="entry name" value="HTH_3"/>
    <property type="match status" value="1"/>
</dbReference>
<dbReference type="SMART" id="SM00530">
    <property type="entry name" value="HTH_XRE"/>
    <property type="match status" value="1"/>
</dbReference>
<dbReference type="SUPFAM" id="SSF47413">
    <property type="entry name" value="lambda repressor-like DNA-binding domains"/>
    <property type="match status" value="1"/>
</dbReference>
<dbReference type="PROSITE" id="PS50943">
    <property type="entry name" value="HTH_CROC1"/>
    <property type="match status" value="1"/>
</dbReference>
<name>HIGA3_MYCTU</name>
<feature type="chain" id="PRO_0000432912" description="Putative antitoxin HigA3">
    <location>
        <begin position="1"/>
        <end position="109"/>
    </location>
</feature>
<feature type="domain" description="HTH cro/C1-type" evidence="1">
    <location>
        <begin position="41"/>
        <end position="97"/>
    </location>
</feature>
<feature type="DNA-binding region" description="H-T-H motif" evidence="1">
    <location>
        <begin position="53"/>
        <end position="72"/>
    </location>
</feature>
<feature type="strand" evidence="5">
    <location>
        <begin position="37"/>
        <end position="40"/>
    </location>
</feature>
<feature type="helix" evidence="5">
    <location>
        <begin position="41"/>
        <end position="47"/>
    </location>
</feature>
<feature type="strand" evidence="4">
    <location>
        <begin position="48"/>
        <end position="50"/>
    </location>
</feature>
<feature type="helix" evidence="5">
    <location>
        <begin position="53"/>
        <end position="60"/>
    </location>
</feature>
<feature type="helix" evidence="5">
    <location>
        <begin position="64"/>
        <end position="72"/>
    </location>
</feature>
<feature type="helix" evidence="5">
    <location>
        <begin position="75"/>
        <end position="77"/>
    </location>
</feature>
<feature type="helix" evidence="5">
    <location>
        <begin position="80"/>
        <end position="89"/>
    </location>
</feature>
<feature type="strand" evidence="5">
    <location>
        <begin position="93"/>
        <end position="100"/>
    </location>
</feature>
<feature type="strand" evidence="5">
    <location>
        <begin position="103"/>
        <end position="107"/>
    </location>
</feature>
<gene>
    <name evidence="2" type="primary">higA3</name>
    <name type="ordered locus">Rv3183</name>
    <name type="ordered locus">RVBD_3183</name>
    <name type="ORF">P425_03315</name>
</gene>
<accession>O53333</accession>
<accession>F2GJP2</accession>
<accession>I6X6L4</accession>
<accession>Q7D5Z3</accession>
<protein>
    <recommendedName>
        <fullName evidence="2">Putative antitoxin HigA3</fullName>
    </recommendedName>
</protein>
<sequence length="109" mass="11802">MTMARNWRDIRADAVAQGRVDLQRAAVAREEMRDAVLAHRLAEIRKALGHARQADVAALMGVSQARVSKLESGDLSHTELGTLQAYVAALGGHLRIVAEFGENTVELTA</sequence>
<reference key="1">
    <citation type="journal article" date="1998" name="Nature">
        <title>Deciphering the biology of Mycobacterium tuberculosis from the complete genome sequence.</title>
        <authorList>
            <person name="Cole S.T."/>
            <person name="Brosch R."/>
            <person name="Parkhill J."/>
            <person name="Garnier T."/>
            <person name="Churcher C.M."/>
            <person name="Harris D.E."/>
            <person name="Gordon S.V."/>
            <person name="Eiglmeier K."/>
            <person name="Gas S."/>
            <person name="Barry C.E. III"/>
            <person name="Tekaia F."/>
            <person name="Badcock K."/>
            <person name="Basham D."/>
            <person name="Brown D."/>
            <person name="Chillingworth T."/>
            <person name="Connor R."/>
            <person name="Davies R.M."/>
            <person name="Devlin K."/>
            <person name="Feltwell T."/>
            <person name="Gentles S."/>
            <person name="Hamlin N."/>
            <person name="Holroyd S."/>
            <person name="Hornsby T."/>
            <person name="Jagels K."/>
            <person name="Krogh A."/>
            <person name="McLean J."/>
            <person name="Moule S."/>
            <person name="Murphy L.D."/>
            <person name="Oliver S."/>
            <person name="Osborne J."/>
            <person name="Quail M.A."/>
            <person name="Rajandream M.A."/>
            <person name="Rogers J."/>
            <person name="Rutter S."/>
            <person name="Seeger K."/>
            <person name="Skelton S."/>
            <person name="Squares S."/>
            <person name="Squares R."/>
            <person name="Sulston J.E."/>
            <person name="Taylor K."/>
            <person name="Whitehead S."/>
            <person name="Barrell B.G."/>
        </authorList>
    </citation>
    <scope>NUCLEOTIDE SEQUENCE [LARGE SCALE GENOMIC DNA]</scope>
    <source>
        <strain>ATCC 25618 / H37Rv</strain>
    </source>
</reference>
<reference key="2">
    <citation type="submission" date="2013-11" db="EMBL/GenBank/DDBJ databases">
        <title>The genome sequence of Mycobacterium tuberculosis H37Rv.</title>
        <authorList>
            <consortium name="The Broad Institute Genome Sequencing Platform"/>
            <person name="Galagan J."/>
            <person name="Kreiswirth B."/>
            <person name="Dobos K."/>
            <person name="Fortune S."/>
            <person name="Fitzgerald M."/>
            <person name="Young S.K."/>
            <person name="Zeng Q."/>
            <person name="Gargeya S."/>
            <person name="Abouelleil A."/>
            <person name="Alvarado L."/>
            <person name="Berlin A.M."/>
            <person name="Chapman S.B."/>
            <person name="Gainer-Dewar J."/>
            <person name="Goldberg J."/>
            <person name="Gnerre S."/>
            <person name="Griggs A."/>
            <person name="Gujja S."/>
            <person name="Hansen M."/>
            <person name="Howarth C."/>
            <person name="Imamovic A."/>
            <person name="Larimer J."/>
            <person name="McCowan C."/>
            <person name="Murphy C."/>
            <person name="Pearson M."/>
            <person name="Poon T."/>
            <person name="Priest M."/>
            <person name="Roberts A."/>
            <person name="Saif S."/>
            <person name="Shea T."/>
            <person name="Sykes S."/>
            <person name="Wortman J."/>
            <person name="Nusbaum C."/>
            <person name="Birren B."/>
        </authorList>
    </citation>
    <scope>NUCLEOTIDE SEQUENCE [LARGE SCALE GENOMIC DNA]</scope>
    <source>
        <strain>ATCC 25618 / H37Rv</strain>
    </source>
</reference>
<reference key="3">
    <citation type="submission" date="2014-04" db="EMBL/GenBank/DDBJ databases">
        <title>The genome sequence of Mycobacterium tuberculosis H37Rv.</title>
        <authorList>
            <consortium name="The Broad Institute Genomics Platform"/>
            <consortium name="The Broad Institute Genome Sequencing Center for Infectious Disease"/>
            <person name="Earl A.M."/>
            <person name="Kreiswirth B."/>
            <person name="Gomez J."/>
            <person name="Victor T."/>
            <person name="Desjardins C."/>
            <person name="Abeel T."/>
            <person name="Young S."/>
            <person name="Zeng Q."/>
            <person name="Gargeya S."/>
            <person name="Abouelleil A."/>
            <person name="Alvarado L."/>
            <person name="Chapman S.B."/>
            <person name="Gainer-Dewar J."/>
            <person name="Goldberg J."/>
            <person name="Griggs A."/>
            <person name="Gujja S."/>
            <person name="Hansen M."/>
            <person name="Howarth C."/>
            <person name="Imamovic A."/>
            <person name="Larimer J."/>
            <person name="Murphy C."/>
            <person name="Naylor J."/>
            <person name="Pearson M."/>
            <person name="Poon T.W."/>
            <person name="Priest M."/>
            <person name="Roberts A."/>
            <person name="Saif S."/>
            <person name="Shea T."/>
            <person name="Sykes S."/>
            <person name="Wortman J."/>
            <person name="Nusbaum C."/>
            <person name="Birren B."/>
        </authorList>
    </citation>
    <scope>NUCLEOTIDE SEQUENCE [LARGE SCALE GENOMIC DNA]</scope>
    <source>
        <strain>ATCC 25618 / H37Rv</strain>
    </source>
</reference>
<reference key="4">
    <citation type="journal article" date="2014" name="Toxins">
        <title>Multiple toxin-antitoxin systems in Mycobacterium tuberculosis.</title>
        <authorList>
            <person name="Sala A."/>
            <person name="Bordes P."/>
            <person name="Genevaux P."/>
        </authorList>
    </citation>
    <scope>DISCUSSION OF POSSIBLE FUNCTION</scope>
    <source>
        <strain>ATCC 25618 / H37Rv</strain>
    </source>
</reference>
<keyword id="KW-0002">3D-structure</keyword>
<keyword id="KW-0238">DNA-binding</keyword>
<keyword id="KW-1185">Reference proteome</keyword>
<keyword id="KW-1277">Toxin-antitoxin system</keyword>
<keyword id="KW-0804">Transcription</keyword>
<keyword id="KW-0805">Transcription regulation</keyword>
<proteinExistence type="evidence at protein level"/>